<keyword id="KW-0010">Activator</keyword>
<keyword id="KW-0539">Nucleus</keyword>
<keyword id="KW-1185">Reference proteome</keyword>
<keyword id="KW-0804">Transcription</keyword>
<keyword id="KW-0805">Transcription regulation</keyword>
<accession>Q6AWY2</accession>
<accession>A3CHD4</accession>
<accession>C7J9M7</accession>
<accession>Q2QQT0</accession>
<sequence>MAMATPTTNGSFLLGSGLDCGSSDVARMQGVLARVRGPFTPTQWMELEHQALIYKHIVANAPVPAGLLLPIRRSLHPPVFPHFSSGGILGSSSLGWGSFQLGYSGSADSEPGRCRRTDGKKWRCSRDAVVDQKYCERHINRGRHRSRKHVEGQSSHAAKATVPAIAQPPIGASNGKLSGSHGVSNELTKTLATNRMMLDKANLIERSQDYTNQQHNILQNNTKGDNWSEEMSSQADYAVIPAGSLMNTPQSANLNPIPQQQRCKQSLFGKGIQHDDIQLSISIPVDNSDLPTNYNKAQMDHVVGGSSNGGNNTRASWIPGSWEASIGGPLGEFFTNTSSASDDKGKSRHPPSLNLLADGHTTSPQLQSPTGVLQMTSFSSVPSSTVSSPAGSLCNGLLTSGLVNAQTVQTL</sequence>
<name>GRF7_ORYSJ</name>
<feature type="chain" id="PRO_0000419308" description="Growth-regulating factor 7">
    <location>
        <begin position="1"/>
        <end position="411"/>
    </location>
</feature>
<feature type="domain" description="QLQ" evidence="2">
    <location>
        <begin position="38"/>
        <end position="73"/>
    </location>
</feature>
<feature type="domain" description="WRC" evidence="3">
    <location>
        <begin position="108"/>
        <end position="152"/>
    </location>
</feature>
<feature type="region of interest" description="Disordered" evidence="4">
    <location>
        <begin position="333"/>
        <end position="369"/>
    </location>
</feature>
<feature type="short sequence motif" description="Bipartite nuclear localization signal" evidence="3">
    <location>
        <begin position="113"/>
        <end position="123"/>
    </location>
</feature>
<feature type="short sequence motif" description="Bipartite nuclear localization signal" evidence="3">
    <location>
        <begin position="141"/>
        <end position="148"/>
    </location>
</feature>
<feature type="compositionally biased region" description="Polar residues" evidence="4">
    <location>
        <begin position="360"/>
        <end position="369"/>
    </location>
</feature>
<dbReference type="EMBL" id="DP000011">
    <property type="protein sequence ID" value="ABA98520.2"/>
    <property type="status" value="ALT_SEQ"/>
    <property type="molecule type" value="Genomic_DNA"/>
</dbReference>
<dbReference type="EMBL" id="AP008218">
    <property type="protein sequence ID" value="BAH95684.1"/>
    <property type="status" value="ALT_SEQ"/>
    <property type="molecule type" value="Genomic_DNA"/>
</dbReference>
<dbReference type="EMBL" id="AP014968">
    <property type="status" value="NOT_ANNOTATED_CDS"/>
    <property type="molecule type" value="Genomic_DNA"/>
</dbReference>
<dbReference type="EMBL" id="CM000149">
    <property type="protein sequence ID" value="EAZ20497.1"/>
    <property type="status" value="ALT_SEQ"/>
    <property type="molecule type" value="Genomic_DNA"/>
</dbReference>
<dbReference type="EMBL" id="AK241557">
    <property type="status" value="NOT_ANNOTATED_CDS"/>
    <property type="molecule type" value="mRNA"/>
</dbReference>
<dbReference type="EMBL" id="BK004862">
    <property type="protein sequence ID" value="DAA05211.1"/>
    <property type="status" value="ALT_SEQ"/>
    <property type="molecule type" value="Genomic_DNA"/>
</dbReference>
<dbReference type="RefSeq" id="XP_015618984.1">
    <property type="nucleotide sequence ID" value="XM_015763498.1"/>
</dbReference>
<dbReference type="RefSeq" id="XP_015618985.1">
    <property type="nucleotide sequence ID" value="XM_015763499.1"/>
</dbReference>
<dbReference type="FunCoup" id="Q6AWY2">
    <property type="interactions" value="21"/>
</dbReference>
<dbReference type="PaxDb" id="39947-Q6AWY2"/>
<dbReference type="EnsemblPlants" id="Os12t0484900-01">
    <property type="protein sequence ID" value="Os12t0484900-01"/>
    <property type="gene ID" value="Os12g0484900"/>
</dbReference>
<dbReference type="GeneID" id="9268363"/>
<dbReference type="Gramene" id="Os12t0484900-01">
    <property type="protein sequence ID" value="Os12t0484900-01"/>
    <property type="gene ID" value="Os12g0484900"/>
</dbReference>
<dbReference type="KEGG" id="dosa:Os12g0484900"/>
<dbReference type="eggNOG" id="ENOG502QRK7">
    <property type="taxonomic scope" value="Eukaryota"/>
</dbReference>
<dbReference type="HOGENOM" id="CLU_038207_1_0_1"/>
<dbReference type="InParanoid" id="Q6AWY2"/>
<dbReference type="OrthoDB" id="1927209at2759"/>
<dbReference type="Proteomes" id="UP000000763">
    <property type="component" value="Chromosome 12"/>
</dbReference>
<dbReference type="Proteomes" id="UP000007752">
    <property type="component" value="Chromosome 12"/>
</dbReference>
<dbReference type="Proteomes" id="UP000059680">
    <property type="component" value="Chromosome 12"/>
</dbReference>
<dbReference type="GO" id="GO:0005634">
    <property type="term" value="C:nucleus"/>
    <property type="evidence" value="ECO:0007669"/>
    <property type="project" value="UniProtKB-SubCell"/>
</dbReference>
<dbReference type="GO" id="GO:0005524">
    <property type="term" value="F:ATP binding"/>
    <property type="evidence" value="ECO:0007669"/>
    <property type="project" value="InterPro"/>
</dbReference>
<dbReference type="GO" id="GO:0032502">
    <property type="term" value="P:developmental process"/>
    <property type="evidence" value="ECO:0007669"/>
    <property type="project" value="InterPro"/>
</dbReference>
<dbReference type="GO" id="GO:0006351">
    <property type="term" value="P:DNA-templated transcription"/>
    <property type="evidence" value="ECO:0007669"/>
    <property type="project" value="InterPro"/>
</dbReference>
<dbReference type="GO" id="GO:0006355">
    <property type="term" value="P:regulation of DNA-templated transcription"/>
    <property type="evidence" value="ECO:0007669"/>
    <property type="project" value="InterPro"/>
</dbReference>
<dbReference type="InterPro" id="IPR014978">
    <property type="entry name" value="Gln-Leu-Gln_QLQ"/>
</dbReference>
<dbReference type="InterPro" id="IPR031137">
    <property type="entry name" value="GRF"/>
</dbReference>
<dbReference type="InterPro" id="IPR014977">
    <property type="entry name" value="WRC_dom"/>
</dbReference>
<dbReference type="PANTHER" id="PTHR31602">
    <property type="entry name" value="GROWTH-REGULATING FACTOR 5"/>
    <property type="match status" value="1"/>
</dbReference>
<dbReference type="PANTHER" id="PTHR31602:SF102">
    <property type="entry name" value="GROWTH-REGULATING FACTOR 7"/>
    <property type="match status" value="1"/>
</dbReference>
<dbReference type="Pfam" id="PF08880">
    <property type="entry name" value="QLQ"/>
    <property type="match status" value="1"/>
</dbReference>
<dbReference type="Pfam" id="PF08879">
    <property type="entry name" value="WRC"/>
    <property type="match status" value="1"/>
</dbReference>
<dbReference type="SMART" id="SM00951">
    <property type="entry name" value="QLQ"/>
    <property type="match status" value="1"/>
</dbReference>
<dbReference type="PROSITE" id="PS51666">
    <property type="entry name" value="QLQ"/>
    <property type="match status" value="1"/>
</dbReference>
<dbReference type="PROSITE" id="PS51667">
    <property type="entry name" value="WRC"/>
    <property type="match status" value="1"/>
</dbReference>
<reference key="1">
    <citation type="journal article" date="2005" name="BMC Biol.">
        <title>The sequence of rice chromosomes 11 and 12, rich in disease resistance genes and recent gene duplications.</title>
        <authorList>
            <consortium name="The rice chromosomes 11 and 12 sequencing consortia"/>
        </authorList>
    </citation>
    <scope>NUCLEOTIDE SEQUENCE [LARGE SCALE GENOMIC DNA]</scope>
    <source>
        <strain>cv. Nipponbare</strain>
    </source>
</reference>
<reference key="2">
    <citation type="journal article" date="2005" name="Nature">
        <title>The map-based sequence of the rice genome.</title>
        <authorList>
            <consortium name="International rice genome sequencing project (IRGSP)"/>
        </authorList>
    </citation>
    <scope>NUCLEOTIDE SEQUENCE [LARGE SCALE GENOMIC DNA]</scope>
    <source>
        <strain>cv. Nipponbare</strain>
    </source>
</reference>
<reference key="3">
    <citation type="journal article" date="2008" name="Nucleic Acids Res.">
        <title>The rice annotation project database (RAP-DB): 2008 update.</title>
        <authorList>
            <consortium name="The rice annotation project (RAP)"/>
        </authorList>
    </citation>
    <scope>GENOME REANNOTATION</scope>
    <source>
        <strain>cv. Nipponbare</strain>
    </source>
</reference>
<reference key="4">
    <citation type="journal article" date="2013" name="Rice">
        <title>Improvement of the Oryza sativa Nipponbare reference genome using next generation sequence and optical map data.</title>
        <authorList>
            <person name="Kawahara Y."/>
            <person name="de la Bastide M."/>
            <person name="Hamilton J.P."/>
            <person name="Kanamori H."/>
            <person name="McCombie W.R."/>
            <person name="Ouyang S."/>
            <person name="Schwartz D.C."/>
            <person name="Tanaka T."/>
            <person name="Wu J."/>
            <person name="Zhou S."/>
            <person name="Childs K.L."/>
            <person name="Davidson R.M."/>
            <person name="Lin H."/>
            <person name="Quesada-Ocampo L."/>
            <person name="Vaillancourt B."/>
            <person name="Sakai H."/>
            <person name="Lee S.S."/>
            <person name="Kim J."/>
            <person name="Numa H."/>
            <person name="Itoh T."/>
            <person name="Buell C.R."/>
            <person name="Matsumoto T."/>
        </authorList>
    </citation>
    <scope>GENOME REANNOTATION</scope>
    <source>
        <strain>cv. Nipponbare</strain>
    </source>
</reference>
<reference key="5">
    <citation type="journal article" date="2005" name="PLoS Biol.">
        <title>The genomes of Oryza sativa: a history of duplications.</title>
        <authorList>
            <person name="Yu J."/>
            <person name="Wang J."/>
            <person name="Lin W."/>
            <person name="Li S."/>
            <person name="Li H."/>
            <person name="Zhou J."/>
            <person name="Ni P."/>
            <person name="Dong W."/>
            <person name="Hu S."/>
            <person name="Zeng C."/>
            <person name="Zhang J."/>
            <person name="Zhang Y."/>
            <person name="Li R."/>
            <person name="Xu Z."/>
            <person name="Li S."/>
            <person name="Li X."/>
            <person name="Zheng H."/>
            <person name="Cong L."/>
            <person name="Lin L."/>
            <person name="Yin J."/>
            <person name="Geng J."/>
            <person name="Li G."/>
            <person name="Shi J."/>
            <person name="Liu J."/>
            <person name="Lv H."/>
            <person name="Li J."/>
            <person name="Wang J."/>
            <person name="Deng Y."/>
            <person name="Ran L."/>
            <person name="Shi X."/>
            <person name="Wang X."/>
            <person name="Wu Q."/>
            <person name="Li C."/>
            <person name="Ren X."/>
            <person name="Wang J."/>
            <person name="Wang X."/>
            <person name="Li D."/>
            <person name="Liu D."/>
            <person name="Zhang X."/>
            <person name="Ji Z."/>
            <person name="Zhao W."/>
            <person name="Sun Y."/>
            <person name="Zhang Z."/>
            <person name="Bao J."/>
            <person name="Han Y."/>
            <person name="Dong L."/>
            <person name="Ji J."/>
            <person name="Chen P."/>
            <person name="Wu S."/>
            <person name="Liu J."/>
            <person name="Xiao Y."/>
            <person name="Bu D."/>
            <person name="Tan J."/>
            <person name="Yang L."/>
            <person name="Ye C."/>
            <person name="Zhang J."/>
            <person name="Xu J."/>
            <person name="Zhou Y."/>
            <person name="Yu Y."/>
            <person name="Zhang B."/>
            <person name="Zhuang S."/>
            <person name="Wei H."/>
            <person name="Liu B."/>
            <person name="Lei M."/>
            <person name="Yu H."/>
            <person name="Li Y."/>
            <person name="Xu H."/>
            <person name="Wei S."/>
            <person name="He X."/>
            <person name="Fang L."/>
            <person name="Zhang Z."/>
            <person name="Zhang Y."/>
            <person name="Huang X."/>
            <person name="Su Z."/>
            <person name="Tong W."/>
            <person name="Li J."/>
            <person name="Tong Z."/>
            <person name="Li S."/>
            <person name="Ye J."/>
            <person name="Wang L."/>
            <person name="Fang L."/>
            <person name="Lei T."/>
            <person name="Chen C.-S."/>
            <person name="Chen H.-C."/>
            <person name="Xu Z."/>
            <person name="Li H."/>
            <person name="Huang H."/>
            <person name="Zhang F."/>
            <person name="Xu H."/>
            <person name="Li N."/>
            <person name="Zhao C."/>
            <person name="Li S."/>
            <person name="Dong L."/>
            <person name="Huang Y."/>
            <person name="Li L."/>
            <person name="Xi Y."/>
            <person name="Qi Q."/>
            <person name="Li W."/>
            <person name="Zhang B."/>
            <person name="Hu W."/>
            <person name="Zhang Y."/>
            <person name="Tian X."/>
            <person name="Jiao Y."/>
            <person name="Liang X."/>
            <person name="Jin J."/>
            <person name="Gao L."/>
            <person name="Zheng W."/>
            <person name="Hao B."/>
            <person name="Liu S.-M."/>
            <person name="Wang W."/>
            <person name="Yuan L."/>
            <person name="Cao M."/>
            <person name="McDermott J."/>
            <person name="Samudrala R."/>
            <person name="Wang J."/>
            <person name="Wong G.K.-S."/>
            <person name="Yang H."/>
        </authorList>
    </citation>
    <scope>NUCLEOTIDE SEQUENCE [LARGE SCALE GENOMIC DNA]</scope>
    <source>
        <strain>cv. Nipponbare</strain>
    </source>
</reference>
<reference key="6">
    <citation type="submission" date="2006-10" db="EMBL/GenBank/DDBJ databases">
        <title>Oryza sativa full length cDNA.</title>
        <authorList>
            <consortium name="The rice full-length cDNA consortium"/>
        </authorList>
    </citation>
    <scope>NUCLEOTIDE SEQUENCE [LARGE SCALE MRNA]</scope>
    <source>
        <strain>cv. Nipponbare</strain>
    </source>
</reference>
<reference key="7">
    <citation type="journal article" date="2004" name="Plant Cell Physiol.">
        <title>Whole genome analysis of the OsGRF gene family encoding plant-specific putative transcription activators in rice (Oryza sativa L.).</title>
        <authorList>
            <person name="Choi D."/>
            <person name="Kim J.H."/>
            <person name="Kende H."/>
        </authorList>
    </citation>
    <scope>IDENTIFICATION</scope>
    <scope>GENE FAMILY</scope>
    <source>
        <strain>cv. Nipponbare</strain>
    </source>
</reference>
<protein>
    <recommendedName>
        <fullName>Growth-regulating factor 7</fullName>
        <shortName>OsGRF7</shortName>
    </recommendedName>
    <alternativeName>
        <fullName>Transcription activator GRF7</fullName>
    </alternativeName>
</protein>
<organism>
    <name type="scientific">Oryza sativa subsp. japonica</name>
    <name type="common">Rice</name>
    <dbReference type="NCBI Taxonomy" id="39947"/>
    <lineage>
        <taxon>Eukaryota</taxon>
        <taxon>Viridiplantae</taxon>
        <taxon>Streptophyta</taxon>
        <taxon>Embryophyta</taxon>
        <taxon>Tracheophyta</taxon>
        <taxon>Spermatophyta</taxon>
        <taxon>Magnoliopsida</taxon>
        <taxon>Liliopsida</taxon>
        <taxon>Poales</taxon>
        <taxon>Poaceae</taxon>
        <taxon>BOP clade</taxon>
        <taxon>Oryzoideae</taxon>
        <taxon>Oryzeae</taxon>
        <taxon>Oryzinae</taxon>
        <taxon>Oryza</taxon>
        <taxon>Oryza sativa</taxon>
    </lineage>
</organism>
<proteinExistence type="evidence at transcript level"/>
<evidence type="ECO:0000250" key="1"/>
<evidence type="ECO:0000255" key="2">
    <source>
        <dbReference type="PROSITE-ProRule" id="PRU01001"/>
    </source>
</evidence>
<evidence type="ECO:0000255" key="3">
    <source>
        <dbReference type="PROSITE-ProRule" id="PRU01002"/>
    </source>
</evidence>
<evidence type="ECO:0000256" key="4">
    <source>
        <dbReference type="SAM" id="MobiDB-lite"/>
    </source>
</evidence>
<evidence type="ECO:0000305" key="5"/>
<comment type="function">
    <text evidence="1">Transcription activator that plays a regulatory role in gibberellin-induced stem elongation.</text>
</comment>
<comment type="subcellular location">
    <subcellularLocation>
        <location evidence="3">Nucleus</location>
    </subcellularLocation>
</comment>
<comment type="domain">
    <text>The QLQ domain and WRC domain may be involved in protein-protein interaction and DNA-binding, respectively.</text>
</comment>
<comment type="similarity">
    <text evidence="5">Belongs to the GRF family.</text>
</comment>
<comment type="sequence caution" evidence="5">
    <conflict type="erroneous gene model prediction">
        <sequence resource="EMBL-CDS" id="ABA98520"/>
    </conflict>
</comment>
<comment type="sequence caution" evidence="5">
    <conflict type="erroneous gene model prediction">
        <sequence resource="EMBL-CDS" id="BAH95684"/>
    </conflict>
</comment>
<comment type="sequence caution" evidence="5">
    <conflict type="erroneous gene model prediction">
        <sequence resource="EMBL-CDS" id="DAA05211"/>
    </conflict>
</comment>
<comment type="sequence caution" evidence="5">
    <conflict type="erroneous gene model prediction">
        <sequence resource="EMBL-CDS" id="EAZ20497"/>
    </conflict>
</comment>
<gene>
    <name type="primary">GRF7</name>
    <name type="ordered locus">Os12g0484900</name>
    <name type="ordered locus">LOC_Os12g29980</name>
    <name type="ORF">OsJ_36104</name>
</gene>